<feature type="chain" id="PRO_0000148638" description="Argininosuccinate synthase">
    <location>
        <begin position="1"/>
        <end position="401"/>
    </location>
</feature>
<feature type="binding site" evidence="1">
    <location>
        <begin position="8"/>
        <end position="16"/>
    </location>
    <ligand>
        <name>ATP</name>
        <dbReference type="ChEBI" id="CHEBI:30616"/>
    </ligand>
</feature>
<feature type="binding site" evidence="1">
    <location>
        <position position="85"/>
    </location>
    <ligand>
        <name>L-citrulline</name>
        <dbReference type="ChEBI" id="CHEBI:57743"/>
    </ligand>
</feature>
<feature type="binding site" evidence="1">
    <location>
        <position position="115"/>
    </location>
    <ligand>
        <name>ATP</name>
        <dbReference type="ChEBI" id="CHEBI:30616"/>
    </ligand>
</feature>
<feature type="binding site" evidence="1">
    <location>
        <position position="117"/>
    </location>
    <ligand>
        <name>L-aspartate</name>
        <dbReference type="ChEBI" id="CHEBI:29991"/>
    </ligand>
</feature>
<feature type="binding site" evidence="1">
    <location>
        <position position="121"/>
    </location>
    <ligand>
        <name>L-aspartate</name>
        <dbReference type="ChEBI" id="CHEBI:29991"/>
    </ligand>
</feature>
<feature type="binding site" evidence="1">
    <location>
        <position position="121"/>
    </location>
    <ligand>
        <name>L-citrulline</name>
        <dbReference type="ChEBI" id="CHEBI:57743"/>
    </ligand>
</feature>
<feature type="binding site" evidence="1">
    <location>
        <position position="122"/>
    </location>
    <ligand>
        <name>L-aspartate</name>
        <dbReference type="ChEBI" id="CHEBI:29991"/>
    </ligand>
</feature>
<feature type="binding site" evidence="1">
    <location>
        <position position="125"/>
    </location>
    <ligand>
        <name>L-citrulline</name>
        <dbReference type="ChEBI" id="CHEBI:57743"/>
    </ligand>
</feature>
<feature type="binding site" evidence="1">
    <location>
        <position position="173"/>
    </location>
    <ligand>
        <name>L-citrulline</name>
        <dbReference type="ChEBI" id="CHEBI:57743"/>
    </ligand>
</feature>
<feature type="binding site" evidence="1">
    <location>
        <position position="258"/>
    </location>
    <ligand>
        <name>L-citrulline</name>
        <dbReference type="ChEBI" id="CHEBI:57743"/>
    </ligand>
</feature>
<feature type="binding site" evidence="1">
    <location>
        <position position="270"/>
    </location>
    <ligand>
        <name>L-citrulline</name>
        <dbReference type="ChEBI" id="CHEBI:57743"/>
    </ligand>
</feature>
<reference key="1">
    <citation type="journal article" date="2004" name="Proc. Natl. Acad. Sci. U.S.A.">
        <title>Complete genomes of two clinical Staphylococcus aureus strains: evidence for the rapid evolution of virulence and drug resistance.</title>
        <authorList>
            <person name="Holden M.T.G."/>
            <person name="Feil E.J."/>
            <person name="Lindsay J.A."/>
            <person name="Peacock S.J."/>
            <person name="Day N.P.J."/>
            <person name="Enright M.C."/>
            <person name="Foster T.J."/>
            <person name="Moore C.E."/>
            <person name="Hurst L."/>
            <person name="Atkin R."/>
            <person name="Barron A."/>
            <person name="Bason N."/>
            <person name="Bentley S.D."/>
            <person name="Chillingworth C."/>
            <person name="Chillingworth T."/>
            <person name="Churcher C."/>
            <person name="Clark L."/>
            <person name="Corton C."/>
            <person name="Cronin A."/>
            <person name="Doggett J."/>
            <person name="Dowd L."/>
            <person name="Feltwell T."/>
            <person name="Hance Z."/>
            <person name="Harris B."/>
            <person name="Hauser H."/>
            <person name="Holroyd S."/>
            <person name="Jagels K."/>
            <person name="James K.D."/>
            <person name="Lennard N."/>
            <person name="Line A."/>
            <person name="Mayes R."/>
            <person name="Moule S."/>
            <person name="Mungall K."/>
            <person name="Ormond D."/>
            <person name="Quail M.A."/>
            <person name="Rabbinowitsch E."/>
            <person name="Rutherford K.M."/>
            <person name="Sanders M."/>
            <person name="Sharp S."/>
            <person name="Simmonds M."/>
            <person name="Stevens K."/>
            <person name="Whitehead S."/>
            <person name="Barrell B.G."/>
            <person name="Spratt B.G."/>
            <person name="Parkhill J."/>
        </authorList>
    </citation>
    <scope>NUCLEOTIDE SEQUENCE [LARGE SCALE GENOMIC DNA]</scope>
    <source>
        <strain>MRSA252</strain>
    </source>
</reference>
<name>ASSY_STAAR</name>
<comment type="catalytic activity">
    <reaction evidence="1">
        <text>L-citrulline + L-aspartate + ATP = 2-(N(omega)-L-arginino)succinate + AMP + diphosphate + H(+)</text>
        <dbReference type="Rhea" id="RHEA:10932"/>
        <dbReference type="ChEBI" id="CHEBI:15378"/>
        <dbReference type="ChEBI" id="CHEBI:29991"/>
        <dbReference type="ChEBI" id="CHEBI:30616"/>
        <dbReference type="ChEBI" id="CHEBI:33019"/>
        <dbReference type="ChEBI" id="CHEBI:57472"/>
        <dbReference type="ChEBI" id="CHEBI:57743"/>
        <dbReference type="ChEBI" id="CHEBI:456215"/>
        <dbReference type="EC" id="6.3.4.5"/>
    </reaction>
</comment>
<comment type="pathway">
    <text evidence="1">Amino-acid biosynthesis; L-arginine biosynthesis; L-arginine from L-ornithine and carbamoyl phosphate: step 2/3.</text>
</comment>
<comment type="subunit">
    <text evidence="1">Homotetramer.</text>
</comment>
<comment type="subcellular location">
    <subcellularLocation>
        <location evidence="1">Cytoplasm</location>
    </subcellularLocation>
</comment>
<comment type="similarity">
    <text evidence="1">Belongs to the argininosuccinate synthase family. Type 1 subfamily.</text>
</comment>
<accession>Q6GIC7</accession>
<sequence>MKEKIVLAYSGGLDTSVAVQWLIDKGYDVVACCLDVGEGKDLDIVYKKALDMRAVECHIIDATKEFSDEYVSYAIKGNLMYENAYPLVSALSRPLIAKKLVEIAEKTNSVGIAHGCTGKGNDQVRFEVAIKALNPSLKAFAPVREWAWSREEEIDYAIKHNIPVSINHDSPYSIDQNLWGRANECGILEDPYAAPPEDAFDLTNALEETPDTADEIILTFDKGIPVQIDGKTYELDDLILTLNALAGKHGIGRIDHVENRLVGIKSREIYEAPAAEVILKAHKALETITLTKDVAHFKPIIEKQFAEQLYNGLWFSPLTDSLKLFIDSTQQYVSGDVRIKLFKGNAIVNGRKSPYTLYDEKLATYTKEDAFNQDAAVGFIDIYGLPTQVNAMLHGGYSNEQ</sequence>
<evidence type="ECO:0000255" key="1">
    <source>
        <dbReference type="HAMAP-Rule" id="MF_00005"/>
    </source>
</evidence>
<gene>
    <name evidence="1" type="primary">argG</name>
    <name type="ordered locus">SAR0923</name>
</gene>
<dbReference type="EC" id="6.3.4.5" evidence="1"/>
<dbReference type="EMBL" id="BX571856">
    <property type="protein sequence ID" value="CAG39929.1"/>
    <property type="molecule type" value="Genomic_DNA"/>
</dbReference>
<dbReference type="RefSeq" id="WP_000660054.1">
    <property type="nucleotide sequence ID" value="NC_002952.2"/>
</dbReference>
<dbReference type="SMR" id="Q6GIC7"/>
<dbReference type="KEGG" id="sar:SAR0923"/>
<dbReference type="HOGENOM" id="CLU_032784_4_2_9"/>
<dbReference type="UniPathway" id="UPA00068">
    <property type="reaction ID" value="UER00113"/>
</dbReference>
<dbReference type="Proteomes" id="UP000000596">
    <property type="component" value="Chromosome"/>
</dbReference>
<dbReference type="GO" id="GO:0005737">
    <property type="term" value="C:cytoplasm"/>
    <property type="evidence" value="ECO:0007669"/>
    <property type="project" value="UniProtKB-SubCell"/>
</dbReference>
<dbReference type="GO" id="GO:0004055">
    <property type="term" value="F:argininosuccinate synthase activity"/>
    <property type="evidence" value="ECO:0007669"/>
    <property type="project" value="UniProtKB-UniRule"/>
</dbReference>
<dbReference type="GO" id="GO:0005524">
    <property type="term" value="F:ATP binding"/>
    <property type="evidence" value="ECO:0007669"/>
    <property type="project" value="UniProtKB-UniRule"/>
</dbReference>
<dbReference type="GO" id="GO:0000053">
    <property type="term" value="P:argininosuccinate metabolic process"/>
    <property type="evidence" value="ECO:0007669"/>
    <property type="project" value="TreeGrafter"/>
</dbReference>
<dbReference type="GO" id="GO:0006526">
    <property type="term" value="P:L-arginine biosynthetic process"/>
    <property type="evidence" value="ECO:0007669"/>
    <property type="project" value="UniProtKB-UniRule"/>
</dbReference>
<dbReference type="GO" id="GO:0000050">
    <property type="term" value="P:urea cycle"/>
    <property type="evidence" value="ECO:0007669"/>
    <property type="project" value="TreeGrafter"/>
</dbReference>
<dbReference type="CDD" id="cd01999">
    <property type="entry name" value="ASS"/>
    <property type="match status" value="1"/>
</dbReference>
<dbReference type="FunFam" id="1.20.5.470:FF:000002">
    <property type="entry name" value="Argininosuccinate synthase"/>
    <property type="match status" value="1"/>
</dbReference>
<dbReference type="FunFam" id="3.40.50.620:FF:000038">
    <property type="entry name" value="Argininosuccinate synthase"/>
    <property type="match status" value="1"/>
</dbReference>
<dbReference type="FunFam" id="3.90.1260.10:FF:000007">
    <property type="entry name" value="Argininosuccinate synthase"/>
    <property type="match status" value="1"/>
</dbReference>
<dbReference type="Gene3D" id="3.90.1260.10">
    <property type="entry name" value="Argininosuccinate synthetase, chain A, domain 2"/>
    <property type="match status" value="1"/>
</dbReference>
<dbReference type="Gene3D" id="3.40.50.620">
    <property type="entry name" value="HUPs"/>
    <property type="match status" value="1"/>
</dbReference>
<dbReference type="Gene3D" id="1.20.5.470">
    <property type="entry name" value="Single helix bin"/>
    <property type="match status" value="1"/>
</dbReference>
<dbReference type="HAMAP" id="MF_00005">
    <property type="entry name" value="Arg_succ_synth_type1"/>
    <property type="match status" value="1"/>
</dbReference>
<dbReference type="InterPro" id="IPR048268">
    <property type="entry name" value="Arginosuc_syn_C"/>
</dbReference>
<dbReference type="InterPro" id="IPR048267">
    <property type="entry name" value="Arginosuc_syn_N"/>
</dbReference>
<dbReference type="InterPro" id="IPR001518">
    <property type="entry name" value="Arginosuc_synth"/>
</dbReference>
<dbReference type="InterPro" id="IPR018223">
    <property type="entry name" value="Arginosuc_synth_CS"/>
</dbReference>
<dbReference type="InterPro" id="IPR023434">
    <property type="entry name" value="Arginosuc_synth_type_1_subfam"/>
</dbReference>
<dbReference type="InterPro" id="IPR024074">
    <property type="entry name" value="AS_cat/multimer_dom_body"/>
</dbReference>
<dbReference type="InterPro" id="IPR014729">
    <property type="entry name" value="Rossmann-like_a/b/a_fold"/>
</dbReference>
<dbReference type="NCBIfam" id="TIGR00032">
    <property type="entry name" value="argG"/>
    <property type="match status" value="1"/>
</dbReference>
<dbReference type="NCBIfam" id="NF001770">
    <property type="entry name" value="PRK00509.1"/>
    <property type="match status" value="1"/>
</dbReference>
<dbReference type="PANTHER" id="PTHR11587">
    <property type="entry name" value="ARGININOSUCCINATE SYNTHASE"/>
    <property type="match status" value="1"/>
</dbReference>
<dbReference type="PANTHER" id="PTHR11587:SF2">
    <property type="entry name" value="ARGININOSUCCINATE SYNTHASE"/>
    <property type="match status" value="1"/>
</dbReference>
<dbReference type="Pfam" id="PF20979">
    <property type="entry name" value="Arginosuc_syn_C"/>
    <property type="match status" value="1"/>
</dbReference>
<dbReference type="Pfam" id="PF00764">
    <property type="entry name" value="Arginosuc_synth"/>
    <property type="match status" value="1"/>
</dbReference>
<dbReference type="SUPFAM" id="SSF52402">
    <property type="entry name" value="Adenine nucleotide alpha hydrolases-like"/>
    <property type="match status" value="1"/>
</dbReference>
<dbReference type="SUPFAM" id="SSF69864">
    <property type="entry name" value="Argininosuccinate synthetase, C-terminal domain"/>
    <property type="match status" value="1"/>
</dbReference>
<dbReference type="PROSITE" id="PS00564">
    <property type="entry name" value="ARGININOSUCCIN_SYN_1"/>
    <property type="match status" value="1"/>
</dbReference>
<dbReference type="PROSITE" id="PS00565">
    <property type="entry name" value="ARGININOSUCCIN_SYN_2"/>
    <property type="match status" value="1"/>
</dbReference>
<proteinExistence type="inferred from homology"/>
<organism>
    <name type="scientific">Staphylococcus aureus (strain MRSA252)</name>
    <dbReference type="NCBI Taxonomy" id="282458"/>
    <lineage>
        <taxon>Bacteria</taxon>
        <taxon>Bacillati</taxon>
        <taxon>Bacillota</taxon>
        <taxon>Bacilli</taxon>
        <taxon>Bacillales</taxon>
        <taxon>Staphylococcaceae</taxon>
        <taxon>Staphylococcus</taxon>
    </lineage>
</organism>
<protein>
    <recommendedName>
        <fullName evidence="1">Argininosuccinate synthase</fullName>
        <ecNumber evidence="1">6.3.4.5</ecNumber>
    </recommendedName>
    <alternativeName>
        <fullName evidence="1">Citrulline--aspartate ligase</fullName>
    </alternativeName>
</protein>
<keyword id="KW-0028">Amino-acid biosynthesis</keyword>
<keyword id="KW-0055">Arginine biosynthesis</keyword>
<keyword id="KW-0067">ATP-binding</keyword>
<keyword id="KW-0963">Cytoplasm</keyword>
<keyword id="KW-0436">Ligase</keyword>
<keyword id="KW-0547">Nucleotide-binding</keyword>